<name>RL2_SYNP6</name>
<sequence length="287" mass="31653">MGIRAFRPYTPGTRERVVSDYAEITRNEPEKSLLVSKHRRKGRNNRGVITCRHRGGGHKRLYRIIDFKRDKRNVPGKIVSIEYDPNRNARISLVYYEDGEKRYILTPAGVHVGTPIIAGDETPIEVGNAMPLQNIPLGTTVHNVELVAGKGGQIVRAAGASAQVVAKEGNYVALKLPSTEVRLVRKECYATIGAVGNAEVRNTSLGKAGRKRWLGRRPEVRGSVMNPVDHPHGGGEGRAPIGRSGPVTPWGKPALGRKTRKKNKQSDCLIQRRRRKSSKRGRGGRDA</sequence>
<keyword id="KW-0687">Ribonucleoprotein</keyword>
<keyword id="KW-0689">Ribosomal protein</keyword>
<keyword id="KW-0694">RNA-binding</keyword>
<keyword id="KW-0699">rRNA-binding</keyword>
<organism>
    <name type="scientific">Synechococcus sp. (strain ATCC 27144 / PCC 6301 / SAUG 1402/1)</name>
    <name type="common">Anacystis nidulans</name>
    <dbReference type="NCBI Taxonomy" id="269084"/>
    <lineage>
        <taxon>Bacteria</taxon>
        <taxon>Bacillati</taxon>
        <taxon>Cyanobacteriota</taxon>
        <taxon>Cyanophyceae</taxon>
        <taxon>Synechococcales</taxon>
        <taxon>Synechococcaceae</taxon>
        <taxon>Synechococcus</taxon>
    </lineage>
</organism>
<comment type="function">
    <text evidence="1">One of the primary rRNA binding proteins. Required for association of the 30S and 50S subunits to form the 70S ribosome, for tRNA binding and peptide bond formation. It has been suggested to have peptidyltransferase activity; this is somewhat controversial. Makes several contacts with the 16S rRNA in the 70S ribosome.</text>
</comment>
<comment type="subunit">
    <text evidence="1">Part of the 50S ribosomal subunit. Forms a bridge to the 30S subunit in the 70S ribosome.</text>
</comment>
<comment type="similarity">
    <text evidence="1">Belongs to the universal ribosomal protein uL2 family.</text>
</comment>
<evidence type="ECO:0000255" key="1">
    <source>
        <dbReference type="HAMAP-Rule" id="MF_01320"/>
    </source>
</evidence>
<evidence type="ECO:0000256" key="2">
    <source>
        <dbReference type="SAM" id="MobiDB-lite"/>
    </source>
</evidence>
<evidence type="ECO:0000305" key="3"/>
<accession>O24692</accession>
<accession>Q5N0W2</accession>
<dbReference type="EMBL" id="AB000111">
    <property type="protein sequence ID" value="BAA22452.1"/>
    <property type="molecule type" value="Genomic_DNA"/>
</dbReference>
<dbReference type="EMBL" id="AP008231">
    <property type="protein sequence ID" value="BAD80058.1"/>
    <property type="molecule type" value="Genomic_DNA"/>
</dbReference>
<dbReference type="RefSeq" id="WP_011244178.1">
    <property type="nucleotide sequence ID" value="NC_006576.1"/>
</dbReference>
<dbReference type="SMR" id="O24692"/>
<dbReference type="KEGG" id="syc:syc1868_d"/>
<dbReference type="eggNOG" id="COG0090">
    <property type="taxonomic scope" value="Bacteria"/>
</dbReference>
<dbReference type="Proteomes" id="UP000001175">
    <property type="component" value="Chromosome"/>
</dbReference>
<dbReference type="GO" id="GO:0015934">
    <property type="term" value="C:large ribosomal subunit"/>
    <property type="evidence" value="ECO:0007669"/>
    <property type="project" value="InterPro"/>
</dbReference>
<dbReference type="GO" id="GO:0019843">
    <property type="term" value="F:rRNA binding"/>
    <property type="evidence" value="ECO:0007669"/>
    <property type="project" value="UniProtKB-UniRule"/>
</dbReference>
<dbReference type="GO" id="GO:0003735">
    <property type="term" value="F:structural constituent of ribosome"/>
    <property type="evidence" value="ECO:0007669"/>
    <property type="project" value="InterPro"/>
</dbReference>
<dbReference type="GO" id="GO:0016740">
    <property type="term" value="F:transferase activity"/>
    <property type="evidence" value="ECO:0007669"/>
    <property type="project" value="InterPro"/>
</dbReference>
<dbReference type="GO" id="GO:0006412">
    <property type="term" value="P:translation"/>
    <property type="evidence" value="ECO:0007669"/>
    <property type="project" value="UniProtKB-UniRule"/>
</dbReference>
<dbReference type="FunFam" id="2.30.30.30:FF:000001">
    <property type="entry name" value="50S ribosomal protein L2"/>
    <property type="match status" value="1"/>
</dbReference>
<dbReference type="FunFam" id="2.40.50.140:FF:000003">
    <property type="entry name" value="50S ribosomal protein L2"/>
    <property type="match status" value="1"/>
</dbReference>
<dbReference type="FunFam" id="4.10.950.10:FF:000001">
    <property type="entry name" value="50S ribosomal protein L2"/>
    <property type="match status" value="1"/>
</dbReference>
<dbReference type="Gene3D" id="2.30.30.30">
    <property type="match status" value="1"/>
</dbReference>
<dbReference type="Gene3D" id="2.40.50.140">
    <property type="entry name" value="Nucleic acid-binding proteins"/>
    <property type="match status" value="1"/>
</dbReference>
<dbReference type="Gene3D" id="4.10.950.10">
    <property type="entry name" value="Ribosomal protein L2, domain 3"/>
    <property type="match status" value="1"/>
</dbReference>
<dbReference type="HAMAP" id="MF_01320_B">
    <property type="entry name" value="Ribosomal_uL2_B"/>
    <property type="match status" value="1"/>
</dbReference>
<dbReference type="InterPro" id="IPR012340">
    <property type="entry name" value="NA-bd_OB-fold"/>
</dbReference>
<dbReference type="InterPro" id="IPR014722">
    <property type="entry name" value="Rib_uL2_dom2"/>
</dbReference>
<dbReference type="InterPro" id="IPR002171">
    <property type="entry name" value="Ribosomal_uL2"/>
</dbReference>
<dbReference type="InterPro" id="IPR005880">
    <property type="entry name" value="Ribosomal_uL2_bac/org-type"/>
</dbReference>
<dbReference type="InterPro" id="IPR022669">
    <property type="entry name" value="Ribosomal_uL2_C"/>
</dbReference>
<dbReference type="InterPro" id="IPR022671">
    <property type="entry name" value="Ribosomal_uL2_CS"/>
</dbReference>
<dbReference type="InterPro" id="IPR014726">
    <property type="entry name" value="Ribosomal_uL2_dom3"/>
</dbReference>
<dbReference type="InterPro" id="IPR022666">
    <property type="entry name" value="Ribosomal_uL2_RNA-bd_dom"/>
</dbReference>
<dbReference type="InterPro" id="IPR008991">
    <property type="entry name" value="Translation_prot_SH3-like_sf"/>
</dbReference>
<dbReference type="NCBIfam" id="TIGR01171">
    <property type="entry name" value="rplB_bact"/>
    <property type="match status" value="1"/>
</dbReference>
<dbReference type="PANTHER" id="PTHR13691:SF5">
    <property type="entry name" value="LARGE RIBOSOMAL SUBUNIT PROTEIN UL2M"/>
    <property type="match status" value="1"/>
</dbReference>
<dbReference type="PANTHER" id="PTHR13691">
    <property type="entry name" value="RIBOSOMAL PROTEIN L2"/>
    <property type="match status" value="1"/>
</dbReference>
<dbReference type="Pfam" id="PF00181">
    <property type="entry name" value="Ribosomal_L2"/>
    <property type="match status" value="1"/>
</dbReference>
<dbReference type="Pfam" id="PF03947">
    <property type="entry name" value="Ribosomal_L2_C"/>
    <property type="match status" value="1"/>
</dbReference>
<dbReference type="PIRSF" id="PIRSF002158">
    <property type="entry name" value="Ribosomal_L2"/>
    <property type="match status" value="1"/>
</dbReference>
<dbReference type="SMART" id="SM01383">
    <property type="entry name" value="Ribosomal_L2"/>
    <property type="match status" value="1"/>
</dbReference>
<dbReference type="SMART" id="SM01382">
    <property type="entry name" value="Ribosomal_L2_C"/>
    <property type="match status" value="1"/>
</dbReference>
<dbReference type="SUPFAM" id="SSF50249">
    <property type="entry name" value="Nucleic acid-binding proteins"/>
    <property type="match status" value="1"/>
</dbReference>
<dbReference type="SUPFAM" id="SSF50104">
    <property type="entry name" value="Translation proteins SH3-like domain"/>
    <property type="match status" value="1"/>
</dbReference>
<dbReference type="PROSITE" id="PS00467">
    <property type="entry name" value="RIBOSOMAL_L2"/>
    <property type="match status" value="1"/>
</dbReference>
<protein>
    <recommendedName>
        <fullName evidence="1">Large ribosomal subunit protein uL2</fullName>
    </recommendedName>
    <alternativeName>
        <fullName evidence="3">50S ribosomal protein L2</fullName>
    </alternativeName>
</protein>
<feature type="chain" id="PRO_0000129637" description="Large ribosomal subunit protein uL2">
    <location>
        <begin position="1"/>
        <end position="287"/>
    </location>
</feature>
<feature type="region of interest" description="Disordered" evidence="2">
    <location>
        <begin position="216"/>
        <end position="287"/>
    </location>
</feature>
<feature type="compositionally biased region" description="Basic residues" evidence="2">
    <location>
        <begin position="271"/>
        <end position="287"/>
    </location>
</feature>
<feature type="sequence conflict" description="In Ref. 1; BAA22452." evidence="3" ref="1">
    <original>C</original>
    <variation>R</variation>
    <location>
        <position position="268"/>
    </location>
</feature>
<reference key="1">
    <citation type="journal article" date="1997" name="Gene">
        <title>Organization of a large gene cluster encoding ribosomal proteins in the cyanobacterium Synechococcus sp. strain PCC 6301: comparison of gene clusters among cyanobacteria, eubacteria and chloroplast genomes.</title>
        <authorList>
            <person name="Sugita M."/>
            <person name="Sugishita H."/>
            <person name="Fujishiro T."/>
            <person name="Tsuboi M."/>
            <person name="Sugita C."/>
            <person name="Endo T."/>
            <person name="Sugiura M."/>
        </authorList>
    </citation>
    <scope>NUCLEOTIDE SEQUENCE [GENOMIC DNA]</scope>
</reference>
<reference key="2">
    <citation type="journal article" date="2007" name="Photosyn. Res.">
        <title>Complete nucleotide sequence of the freshwater unicellular cyanobacterium Synechococcus elongatus PCC 6301 chromosome: gene content and organization.</title>
        <authorList>
            <person name="Sugita C."/>
            <person name="Ogata K."/>
            <person name="Shikata M."/>
            <person name="Jikuya H."/>
            <person name="Takano J."/>
            <person name="Furumichi M."/>
            <person name="Kanehisa M."/>
            <person name="Omata T."/>
            <person name="Sugiura M."/>
            <person name="Sugita M."/>
        </authorList>
    </citation>
    <scope>NUCLEOTIDE SEQUENCE [LARGE SCALE GENOMIC DNA]</scope>
    <source>
        <strain>ATCC 27144 / PCC 6301 / SAUG 1402/1</strain>
    </source>
</reference>
<gene>
    <name evidence="1" type="primary">rplB</name>
    <name evidence="1" type="synonym">rpl2</name>
    <name type="ordered locus">syc1868_d</name>
</gene>
<proteinExistence type="inferred from homology"/>